<organism>
    <name type="scientific">Pseudomonas entomophila (strain L48)</name>
    <dbReference type="NCBI Taxonomy" id="384676"/>
    <lineage>
        <taxon>Bacteria</taxon>
        <taxon>Pseudomonadati</taxon>
        <taxon>Pseudomonadota</taxon>
        <taxon>Gammaproteobacteria</taxon>
        <taxon>Pseudomonadales</taxon>
        <taxon>Pseudomonadaceae</taxon>
        <taxon>Pseudomonas</taxon>
    </lineage>
</organism>
<gene>
    <name evidence="1" type="primary">dnaK</name>
    <name type="ordered locus">PSEEN0778</name>
</gene>
<proteinExistence type="inferred from homology"/>
<accession>Q1IF59</accession>
<feature type="chain" id="PRO_1000059633" description="Chaperone protein DnaK">
    <location>
        <begin position="1"/>
        <end position="641"/>
    </location>
</feature>
<feature type="region of interest" description="Disordered" evidence="2">
    <location>
        <begin position="602"/>
        <end position="641"/>
    </location>
</feature>
<feature type="compositionally biased region" description="Low complexity" evidence="2">
    <location>
        <begin position="604"/>
        <end position="619"/>
    </location>
</feature>
<feature type="compositionally biased region" description="Basic and acidic residues" evidence="2">
    <location>
        <begin position="620"/>
        <end position="641"/>
    </location>
</feature>
<feature type="modified residue" description="Phosphothreonine; by autocatalysis" evidence="1">
    <location>
        <position position="199"/>
    </location>
</feature>
<reference key="1">
    <citation type="journal article" date="2006" name="Nat. Biotechnol.">
        <title>Complete genome sequence of the entomopathogenic and metabolically versatile soil bacterium Pseudomonas entomophila.</title>
        <authorList>
            <person name="Vodovar N."/>
            <person name="Vallenet D."/>
            <person name="Cruveiller S."/>
            <person name="Rouy Z."/>
            <person name="Barbe V."/>
            <person name="Acosta C."/>
            <person name="Cattolico L."/>
            <person name="Jubin C."/>
            <person name="Lajus A."/>
            <person name="Segurens B."/>
            <person name="Vacherie B."/>
            <person name="Wincker P."/>
            <person name="Weissenbach J."/>
            <person name="Lemaitre B."/>
            <person name="Medigue C."/>
            <person name="Boccard F."/>
        </authorList>
    </citation>
    <scope>NUCLEOTIDE SEQUENCE [LARGE SCALE GENOMIC DNA]</scope>
    <source>
        <strain>L48</strain>
    </source>
</reference>
<keyword id="KW-0067">ATP-binding</keyword>
<keyword id="KW-0143">Chaperone</keyword>
<keyword id="KW-0547">Nucleotide-binding</keyword>
<keyword id="KW-0597">Phosphoprotein</keyword>
<keyword id="KW-0346">Stress response</keyword>
<dbReference type="EMBL" id="CT573326">
    <property type="protein sequence ID" value="CAK13695.1"/>
    <property type="molecule type" value="Genomic_DNA"/>
</dbReference>
<dbReference type="RefSeq" id="WP_011532126.1">
    <property type="nucleotide sequence ID" value="NC_008027.1"/>
</dbReference>
<dbReference type="SMR" id="Q1IF59"/>
<dbReference type="STRING" id="384676.PSEEN0778"/>
<dbReference type="GeneID" id="32804085"/>
<dbReference type="KEGG" id="pen:PSEEN0778"/>
<dbReference type="eggNOG" id="COG0443">
    <property type="taxonomic scope" value="Bacteria"/>
</dbReference>
<dbReference type="HOGENOM" id="CLU_005965_2_1_6"/>
<dbReference type="OrthoDB" id="9766019at2"/>
<dbReference type="Proteomes" id="UP000000658">
    <property type="component" value="Chromosome"/>
</dbReference>
<dbReference type="GO" id="GO:0005524">
    <property type="term" value="F:ATP binding"/>
    <property type="evidence" value="ECO:0007669"/>
    <property type="project" value="UniProtKB-UniRule"/>
</dbReference>
<dbReference type="GO" id="GO:0140662">
    <property type="term" value="F:ATP-dependent protein folding chaperone"/>
    <property type="evidence" value="ECO:0007669"/>
    <property type="project" value="InterPro"/>
</dbReference>
<dbReference type="GO" id="GO:0051082">
    <property type="term" value="F:unfolded protein binding"/>
    <property type="evidence" value="ECO:0007669"/>
    <property type="project" value="InterPro"/>
</dbReference>
<dbReference type="CDD" id="cd10234">
    <property type="entry name" value="ASKHA_NBD_HSP70_DnaK-like"/>
    <property type="match status" value="1"/>
</dbReference>
<dbReference type="FunFam" id="2.60.34.10:FF:000014">
    <property type="entry name" value="Chaperone protein DnaK HSP70"/>
    <property type="match status" value="1"/>
</dbReference>
<dbReference type="FunFam" id="3.30.30.30:FF:000003">
    <property type="entry name" value="Heat shock protein 9"/>
    <property type="match status" value="1"/>
</dbReference>
<dbReference type="FunFam" id="1.20.1270.10:FF:000001">
    <property type="entry name" value="Molecular chaperone DnaK"/>
    <property type="match status" value="1"/>
</dbReference>
<dbReference type="FunFam" id="3.30.420.40:FF:000004">
    <property type="entry name" value="Molecular chaperone DnaK"/>
    <property type="match status" value="1"/>
</dbReference>
<dbReference type="FunFam" id="3.90.640.10:FF:000003">
    <property type="entry name" value="Molecular chaperone DnaK"/>
    <property type="match status" value="1"/>
</dbReference>
<dbReference type="Gene3D" id="1.20.1270.10">
    <property type="match status" value="1"/>
</dbReference>
<dbReference type="Gene3D" id="3.30.420.40">
    <property type="match status" value="2"/>
</dbReference>
<dbReference type="Gene3D" id="3.90.640.10">
    <property type="entry name" value="Actin, Chain A, domain 4"/>
    <property type="match status" value="1"/>
</dbReference>
<dbReference type="Gene3D" id="2.60.34.10">
    <property type="entry name" value="Substrate Binding Domain Of DNAk, Chain A, domain 1"/>
    <property type="match status" value="1"/>
</dbReference>
<dbReference type="HAMAP" id="MF_00332">
    <property type="entry name" value="DnaK"/>
    <property type="match status" value="1"/>
</dbReference>
<dbReference type="InterPro" id="IPR043129">
    <property type="entry name" value="ATPase_NBD"/>
</dbReference>
<dbReference type="InterPro" id="IPR012725">
    <property type="entry name" value="Chaperone_DnaK"/>
</dbReference>
<dbReference type="InterPro" id="IPR018181">
    <property type="entry name" value="Heat_shock_70_CS"/>
</dbReference>
<dbReference type="InterPro" id="IPR029048">
    <property type="entry name" value="HSP70_C_sf"/>
</dbReference>
<dbReference type="InterPro" id="IPR029047">
    <property type="entry name" value="HSP70_peptide-bd_sf"/>
</dbReference>
<dbReference type="InterPro" id="IPR013126">
    <property type="entry name" value="Hsp_70_fam"/>
</dbReference>
<dbReference type="NCBIfam" id="NF001413">
    <property type="entry name" value="PRK00290.1"/>
    <property type="match status" value="1"/>
</dbReference>
<dbReference type="NCBIfam" id="TIGR02350">
    <property type="entry name" value="prok_dnaK"/>
    <property type="match status" value="1"/>
</dbReference>
<dbReference type="PANTHER" id="PTHR19375">
    <property type="entry name" value="HEAT SHOCK PROTEIN 70KDA"/>
    <property type="match status" value="1"/>
</dbReference>
<dbReference type="Pfam" id="PF00012">
    <property type="entry name" value="HSP70"/>
    <property type="match status" value="1"/>
</dbReference>
<dbReference type="PRINTS" id="PR00301">
    <property type="entry name" value="HEATSHOCK70"/>
</dbReference>
<dbReference type="SUPFAM" id="SSF53067">
    <property type="entry name" value="Actin-like ATPase domain"/>
    <property type="match status" value="2"/>
</dbReference>
<dbReference type="SUPFAM" id="SSF100934">
    <property type="entry name" value="Heat shock protein 70kD (HSP70), C-terminal subdomain"/>
    <property type="match status" value="1"/>
</dbReference>
<dbReference type="SUPFAM" id="SSF100920">
    <property type="entry name" value="Heat shock protein 70kD (HSP70), peptide-binding domain"/>
    <property type="match status" value="1"/>
</dbReference>
<dbReference type="PROSITE" id="PS00297">
    <property type="entry name" value="HSP70_1"/>
    <property type="match status" value="1"/>
</dbReference>
<dbReference type="PROSITE" id="PS00329">
    <property type="entry name" value="HSP70_2"/>
    <property type="match status" value="1"/>
</dbReference>
<dbReference type="PROSITE" id="PS01036">
    <property type="entry name" value="HSP70_3"/>
    <property type="match status" value="1"/>
</dbReference>
<name>DNAK_PSEE4</name>
<sequence length="641" mass="68634">MGKIIGIDLGTTNSCVSVLENGTAKVIENAEGARTTPSIIAYANDGEILVGQSAKRQAVTNPHNTLFAVKRLIGRRFDEEVVQKDIKLVPYKIVKASNGDAWVQASGKDMAPPQISAEVLKKMKKTAEDYLGEPVTEAVITVPAYFNDSQRQATKDAGRIAGLDVKRIINEPTAAALAYGMDKAKGDHTVIVYDLGGGTFDVSVIEIAEVDGEHQFEVLATNGDTFLGGEDFDMRLIDYLVDEFKKESGMDLKNDPLALQRLKEAAEKAKIELSSAQSTDVNLPYITADATGPKHLNVKISRAKLEALVEDLVTRTIEPCRIALKDAGIDASKIDDVILVGGQTRMPMVQKAVADFFGKEARKDVNPDEAVAMGAAIQGAVLAGDVKDVLLLDVSPLTLGIETMGGVMTALIEKNTTIPTKKSQVFSTADDNQGAVTIHVLQGERKQASQNKSLGKFDLADIPPAPRGVPQIEVTFDIDANGILHVGAKDKATGKAQSIVIKANSGLSDEEVERMVRDAEANAEEDRKFEELAAARNQGDALVHSTRKMVADAGDKVTAEEKTAIEAAVVALEAAVKGDDKAAIDAKVEELSKVSAPVAQKMYAEQQAEQPQGGAQQAEPEAKHDDVVDAEFEEVKDNNKQ</sequence>
<protein>
    <recommendedName>
        <fullName evidence="1">Chaperone protein DnaK</fullName>
    </recommendedName>
    <alternativeName>
        <fullName evidence="1">HSP70</fullName>
    </alternativeName>
    <alternativeName>
        <fullName evidence="1">Heat shock 70 kDa protein</fullName>
    </alternativeName>
    <alternativeName>
        <fullName evidence="1">Heat shock protein 70</fullName>
    </alternativeName>
</protein>
<evidence type="ECO:0000255" key="1">
    <source>
        <dbReference type="HAMAP-Rule" id="MF_00332"/>
    </source>
</evidence>
<evidence type="ECO:0000256" key="2">
    <source>
        <dbReference type="SAM" id="MobiDB-lite"/>
    </source>
</evidence>
<comment type="function">
    <text evidence="1">Acts as a chaperone.</text>
</comment>
<comment type="induction">
    <text evidence="1">By stress conditions e.g. heat shock.</text>
</comment>
<comment type="similarity">
    <text evidence="1">Belongs to the heat shock protein 70 family.</text>
</comment>